<organism>
    <name type="scientific">Acaryochloris marina (strain MBIC 11017)</name>
    <dbReference type="NCBI Taxonomy" id="329726"/>
    <lineage>
        <taxon>Bacteria</taxon>
        <taxon>Bacillati</taxon>
        <taxon>Cyanobacteriota</taxon>
        <taxon>Cyanophyceae</taxon>
        <taxon>Acaryochloridales</taxon>
        <taxon>Acaryochloridaceae</taxon>
        <taxon>Acaryochloris</taxon>
    </lineage>
</organism>
<gene>
    <name evidence="1" type="primary">accD</name>
    <name type="ordered locus">AM1_3882</name>
</gene>
<sequence length="304" mass="33484">MSLFDWFANRRKSHPVTKAQPEREISDGLWSKCESCGALTYTKDLRANQMVCLECGHHLRVTSDERIAQLIDAETWVAMDNNLVACDPLQFRDRKAYCDRIQEYQSKTGLQDAVQTGVGELDGLPLALGVMDFRFMGGSMGSVVGEKLTRLIEHATQNRLPLVIVCASGGARMQEGMLSLMQMAKTSAALDQHRTNRLLYIPVLTHPTTGGVTASFAMLGDMILAEPKATIGFAGRRVVEQTLREKLPDDFQTAEYLLSHGFVDAIVPRPELKRTLAQLIRIHAQMPMASDVSPAAVPVAAAVE</sequence>
<accession>B0C728</accession>
<feature type="chain" id="PRO_0000358943" description="Acetyl-coenzyme A carboxylase carboxyl transferase subunit beta">
    <location>
        <begin position="1"/>
        <end position="304"/>
    </location>
</feature>
<feature type="domain" description="CoA carboxyltransferase N-terminal" evidence="2">
    <location>
        <begin position="29"/>
        <end position="298"/>
    </location>
</feature>
<feature type="zinc finger region" description="C4-type" evidence="1">
    <location>
        <begin position="33"/>
        <end position="55"/>
    </location>
</feature>
<feature type="binding site" evidence="1">
    <location>
        <position position="33"/>
    </location>
    <ligand>
        <name>Zn(2+)</name>
        <dbReference type="ChEBI" id="CHEBI:29105"/>
    </ligand>
</feature>
<feature type="binding site" evidence="1">
    <location>
        <position position="36"/>
    </location>
    <ligand>
        <name>Zn(2+)</name>
        <dbReference type="ChEBI" id="CHEBI:29105"/>
    </ligand>
</feature>
<feature type="binding site" evidence="1">
    <location>
        <position position="52"/>
    </location>
    <ligand>
        <name>Zn(2+)</name>
        <dbReference type="ChEBI" id="CHEBI:29105"/>
    </ligand>
</feature>
<feature type="binding site" evidence="1">
    <location>
        <position position="55"/>
    </location>
    <ligand>
        <name>Zn(2+)</name>
        <dbReference type="ChEBI" id="CHEBI:29105"/>
    </ligand>
</feature>
<evidence type="ECO:0000255" key="1">
    <source>
        <dbReference type="HAMAP-Rule" id="MF_01395"/>
    </source>
</evidence>
<evidence type="ECO:0000255" key="2">
    <source>
        <dbReference type="PROSITE-ProRule" id="PRU01136"/>
    </source>
</evidence>
<protein>
    <recommendedName>
        <fullName evidence="1">Acetyl-coenzyme A carboxylase carboxyl transferase subunit beta</fullName>
        <shortName evidence="1">ACCase subunit beta</shortName>
        <shortName evidence="1">Acetyl-CoA carboxylase carboxyltransferase subunit beta</shortName>
        <ecNumber evidence="1">2.1.3.15</ecNumber>
    </recommendedName>
</protein>
<reference key="1">
    <citation type="journal article" date="2008" name="Proc. Natl. Acad. Sci. U.S.A.">
        <title>Niche adaptation and genome expansion in the chlorophyll d-producing cyanobacterium Acaryochloris marina.</title>
        <authorList>
            <person name="Swingley W.D."/>
            <person name="Chen M."/>
            <person name="Cheung P.C."/>
            <person name="Conrad A.L."/>
            <person name="Dejesa L.C."/>
            <person name="Hao J."/>
            <person name="Honchak B.M."/>
            <person name="Karbach L.E."/>
            <person name="Kurdoglu A."/>
            <person name="Lahiri S."/>
            <person name="Mastrian S.D."/>
            <person name="Miyashita H."/>
            <person name="Page L."/>
            <person name="Ramakrishna P."/>
            <person name="Satoh S."/>
            <person name="Sattley W.M."/>
            <person name="Shimada Y."/>
            <person name="Taylor H.L."/>
            <person name="Tomo T."/>
            <person name="Tsuchiya T."/>
            <person name="Wang Z.T."/>
            <person name="Raymond J."/>
            <person name="Mimuro M."/>
            <person name="Blankenship R.E."/>
            <person name="Touchman J.W."/>
        </authorList>
    </citation>
    <scope>NUCLEOTIDE SEQUENCE [LARGE SCALE GENOMIC DNA]</scope>
    <source>
        <strain>MBIC 11017</strain>
    </source>
</reference>
<proteinExistence type="inferred from homology"/>
<name>ACCD_ACAM1</name>
<keyword id="KW-0067">ATP-binding</keyword>
<keyword id="KW-0963">Cytoplasm</keyword>
<keyword id="KW-0275">Fatty acid biosynthesis</keyword>
<keyword id="KW-0276">Fatty acid metabolism</keyword>
<keyword id="KW-0444">Lipid biosynthesis</keyword>
<keyword id="KW-0443">Lipid metabolism</keyword>
<keyword id="KW-0479">Metal-binding</keyword>
<keyword id="KW-0547">Nucleotide-binding</keyword>
<keyword id="KW-1185">Reference proteome</keyword>
<keyword id="KW-0808">Transferase</keyword>
<keyword id="KW-0862">Zinc</keyword>
<keyword id="KW-0863">Zinc-finger</keyword>
<dbReference type="EC" id="2.1.3.15" evidence="1"/>
<dbReference type="EMBL" id="CP000828">
    <property type="protein sequence ID" value="ABW28867.1"/>
    <property type="molecule type" value="Genomic_DNA"/>
</dbReference>
<dbReference type="RefSeq" id="WP_012164232.1">
    <property type="nucleotide sequence ID" value="NC_009925.1"/>
</dbReference>
<dbReference type="SMR" id="B0C728"/>
<dbReference type="STRING" id="329726.AM1_3882"/>
<dbReference type="KEGG" id="amr:AM1_3882"/>
<dbReference type="eggNOG" id="COG0777">
    <property type="taxonomic scope" value="Bacteria"/>
</dbReference>
<dbReference type="HOGENOM" id="CLU_015486_1_1_3"/>
<dbReference type="OrthoDB" id="9772975at2"/>
<dbReference type="UniPathway" id="UPA00655">
    <property type="reaction ID" value="UER00711"/>
</dbReference>
<dbReference type="Proteomes" id="UP000000268">
    <property type="component" value="Chromosome"/>
</dbReference>
<dbReference type="GO" id="GO:0009317">
    <property type="term" value="C:acetyl-CoA carboxylase complex"/>
    <property type="evidence" value="ECO:0007669"/>
    <property type="project" value="InterPro"/>
</dbReference>
<dbReference type="GO" id="GO:0003989">
    <property type="term" value="F:acetyl-CoA carboxylase activity"/>
    <property type="evidence" value="ECO:0007669"/>
    <property type="project" value="InterPro"/>
</dbReference>
<dbReference type="GO" id="GO:0005524">
    <property type="term" value="F:ATP binding"/>
    <property type="evidence" value="ECO:0007669"/>
    <property type="project" value="UniProtKB-KW"/>
</dbReference>
<dbReference type="GO" id="GO:0016743">
    <property type="term" value="F:carboxyl- or carbamoyltransferase activity"/>
    <property type="evidence" value="ECO:0007669"/>
    <property type="project" value="UniProtKB-UniRule"/>
</dbReference>
<dbReference type="GO" id="GO:0008270">
    <property type="term" value="F:zinc ion binding"/>
    <property type="evidence" value="ECO:0007669"/>
    <property type="project" value="UniProtKB-UniRule"/>
</dbReference>
<dbReference type="GO" id="GO:0006633">
    <property type="term" value="P:fatty acid biosynthetic process"/>
    <property type="evidence" value="ECO:0007669"/>
    <property type="project" value="UniProtKB-KW"/>
</dbReference>
<dbReference type="GO" id="GO:2001295">
    <property type="term" value="P:malonyl-CoA biosynthetic process"/>
    <property type="evidence" value="ECO:0007669"/>
    <property type="project" value="UniProtKB-UniRule"/>
</dbReference>
<dbReference type="Gene3D" id="3.90.226.10">
    <property type="entry name" value="2-enoyl-CoA Hydratase, Chain A, domain 1"/>
    <property type="match status" value="1"/>
</dbReference>
<dbReference type="HAMAP" id="MF_01395">
    <property type="entry name" value="AcetylCoA_CT_beta"/>
    <property type="match status" value="1"/>
</dbReference>
<dbReference type="InterPro" id="IPR034733">
    <property type="entry name" value="AcCoA_carboxyl_beta"/>
</dbReference>
<dbReference type="InterPro" id="IPR000438">
    <property type="entry name" value="Acetyl_CoA_COase_Trfase_b_su"/>
</dbReference>
<dbReference type="InterPro" id="IPR029045">
    <property type="entry name" value="ClpP/crotonase-like_dom_sf"/>
</dbReference>
<dbReference type="InterPro" id="IPR011762">
    <property type="entry name" value="COA_CT_N"/>
</dbReference>
<dbReference type="InterPro" id="IPR041010">
    <property type="entry name" value="Znf-ACC"/>
</dbReference>
<dbReference type="NCBIfam" id="TIGR00515">
    <property type="entry name" value="accD"/>
    <property type="match status" value="1"/>
</dbReference>
<dbReference type="PANTHER" id="PTHR42995">
    <property type="entry name" value="ACETYL-COENZYME A CARBOXYLASE CARBOXYL TRANSFERASE SUBUNIT BETA, CHLOROPLASTIC"/>
    <property type="match status" value="1"/>
</dbReference>
<dbReference type="PANTHER" id="PTHR42995:SF5">
    <property type="entry name" value="ACETYL-COENZYME A CARBOXYLASE CARBOXYL TRANSFERASE SUBUNIT BETA, CHLOROPLASTIC"/>
    <property type="match status" value="1"/>
</dbReference>
<dbReference type="Pfam" id="PF01039">
    <property type="entry name" value="Carboxyl_trans"/>
    <property type="match status" value="1"/>
</dbReference>
<dbReference type="Pfam" id="PF17848">
    <property type="entry name" value="Zn_ribbon_ACC"/>
    <property type="match status" value="1"/>
</dbReference>
<dbReference type="PRINTS" id="PR01070">
    <property type="entry name" value="ACCCTRFRASEB"/>
</dbReference>
<dbReference type="SUPFAM" id="SSF52096">
    <property type="entry name" value="ClpP/crotonase"/>
    <property type="match status" value="1"/>
</dbReference>
<dbReference type="PROSITE" id="PS50980">
    <property type="entry name" value="COA_CT_NTER"/>
    <property type="match status" value="1"/>
</dbReference>
<comment type="function">
    <text evidence="1">Component of the acetyl coenzyme A carboxylase (ACC) complex. Biotin carboxylase (BC) catalyzes the carboxylation of biotin on its carrier protein (BCCP) and then the CO(2) group is transferred by the transcarboxylase to acetyl-CoA to form malonyl-CoA.</text>
</comment>
<comment type="catalytic activity">
    <reaction evidence="1">
        <text>N(6)-carboxybiotinyl-L-lysyl-[protein] + acetyl-CoA = N(6)-biotinyl-L-lysyl-[protein] + malonyl-CoA</text>
        <dbReference type="Rhea" id="RHEA:54728"/>
        <dbReference type="Rhea" id="RHEA-COMP:10505"/>
        <dbReference type="Rhea" id="RHEA-COMP:10506"/>
        <dbReference type="ChEBI" id="CHEBI:57288"/>
        <dbReference type="ChEBI" id="CHEBI:57384"/>
        <dbReference type="ChEBI" id="CHEBI:83144"/>
        <dbReference type="ChEBI" id="CHEBI:83145"/>
        <dbReference type="EC" id="2.1.3.15"/>
    </reaction>
</comment>
<comment type="cofactor">
    <cofactor evidence="1">
        <name>Zn(2+)</name>
        <dbReference type="ChEBI" id="CHEBI:29105"/>
    </cofactor>
    <text evidence="1">Binds 1 zinc ion per subunit.</text>
</comment>
<comment type="pathway">
    <text evidence="1">Lipid metabolism; malonyl-CoA biosynthesis; malonyl-CoA from acetyl-CoA: step 1/1.</text>
</comment>
<comment type="subunit">
    <text evidence="1">Acetyl-CoA carboxylase is a heterohexamer composed of biotin carboxyl carrier protein (AccB), biotin carboxylase (AccC) and two subunits each of ACCase subunit alpha (AccA) and ACCase subunit beta (AccD).</text>
</comment>
<comment type="subcellular location">
    <subcellularLocation>
        <location evidence="1">Cytoplasm</location>
    </subcellularLocation>
</comment>
<comment type="similarity">
    <text evidence="1">Belongs to the AccD/PCCB family.</text>
</comment>